<accession>Q6P1L8</accession>
<accession>B2R575</accession>
<accession>Q96Q72</accession>
<organism>
    <name type="scientific">Homo sapiens</name>
    <name type="common">Human</name>
    <dbReference type="NCBI Taxonomy" id="9606"/>
    <lineage>
        <taxon>Eukaryota</taxon>
        <taxon>Metazoa</taxon>
        <taxon>Chordata</taxon>
        <taxon>Craniata</taxon>
        <taxon>Vertebrata</taxon>
        <taxon>Euteleostomi</taxon>
        <taxon>Mammalia</taxon>
        <taxon>Eutheria</taxon>
        <taxon>Euarchontoglires</taxon>
        <taxon>Primates</taxon>
        <taxon>Haplorrhini</taxon>
        <taxon>Catarrhini</taxon>
        <taxon>Hominidae</taxon>
        <taxon>Homo</taxon>
    </lineage>
</organism>
<gene>
    <name type="primary">MRPL14</name>
    <name type="synonym">MRPL32</name>
    <name type="synonym">RPML32</name>
</gene>
<dbReference type="EMBL" id="AK312086">
    <property type="protein sequence ID" value="BAG35022.1"/>
    <property type="molecule type" value="mRNA"/>
</dbReference>
<dbReference type="EMBL" id="AL109615">
    <property type="status" value="NOT_ANNOTATED_CDS"/>
    <property type="molecule type" value="Genomic_DNA"/>
</dbReference>
<dbReference type="EMBL" id="CH471081">
    <property type="protein sequence ID" value="EAX04243.1"/>
    <property type="molecule type" value="Genomic_DNA"/>
</dbReference>
<dbReference type="EMBL" id="BC065005">
    <property type="protein sequence ID" value="AAH65005.1"/>
    <property type="molecule type" value="mRNA"/>
</dbReference>
<dbReference type="EMBL" id="AB051339">
    <property type="protein sequence ID" value="BAB54929.2"/>
    <property type="molecule type" value="Genomic_DNA"/>
</dbReference>
<dbReference type="CCDS" id="CCDS34460.1"/>
<dbReference type="RefSeq" id="NP_001305696.1">
    <property type="nucleotide sequence ID" value="NM_001318767.2"/>
</dbReference>
<dbReference type="RefSeq" id="NP_001305697.1">
    <property type="nucleotide sequence ID" value="NM_001318768.2"/>
</dbReference>
<dbReference type="RefSeq" id="NP_115487.2">
    <property type="nucleotide sequence ID" value="NM_032111.4"/>
</dbReference>
<dbReference type="PDB" id="3J7Y">
    <property type="method" value="EM"/>
    <property type="resolution" value="3.40 A"/>
    <property type="chains" value="L=1-145"/>
</dbReference>
<dbReference type="PDB" id="3J9M">
    <property type="method" value="EM"/>
    <property type="resolution" value="3.50 A"/>
    <property type="chains" value="L=1-145"/>
</dbReference>
<dbReference type="PDB" id="5OOL">
    <property type="method" value="EM"/>
    <property type="resolution" value="3.06 A"/>
    <property type="chains" value="L=1-145"/>
</dbReference>
<dbReference type="PDB" id="5OOM">
    <property type="method" value="EM"/>
    <property type="resolution" value="3.03 A"/>
    <property type="chains" value="L=1-145"/>
</dbReference>
<dbReference type="PDB" id="6I9R">
    <property type="method" value="EM"/>
    <property type="resolution" value="3.90 A"/>
    <property type="chains" value="L=1-145"/>
</dbReference>
<dbReference type="PDB" id="6NU2">
    <property type="method" value="EM"/>
    <property type="resolution" value="3.90 A"/>
    <property type="chains" value="L=31-145"/>
</dbReference>
<dbReference type="PDB" id="6NU3">
    <property type="method" value="EM"/>
    <property type="resolution" value="4.40 A"/>
    <property type="chains" value="L=1-145"/>
</dbReference>
<dbReference type="PDB" id="6VLZ">
    <property type="method" value="EM"/>
    <property type="resolution" value="2.97 A"/>
    <property type="chains" value="L=1-145"/>
</dbReference>
<dbReference type="PDB" id="6VMI">
    <property type="method" value="EM"/>
    <property type="resolution" value="2.96 A"/>
    <property type="chains" value="L=1-145"/>
</dbReference>
<dbReference type="PDB" id="6ZM5">
    <property type="method" value="EM"/>
    <property type="resolution" value="2.89 A"/>
    <property type="chains" value="L=1-145"/>
</dbReference>
<dbReference type="PDB" id="6ZM6">
    <property type="method" value="EM"/>
    <property type="resolution" value="2.59 A"/>
    <property type="chains" value="L=1-145"/>
</dbReference>
<dbReference type="PDB" id="6ZS9">
    <property type="method" value="EM"/>
    <property type="resolution" value="4.00 A"/>
    <property type="chains" value="XL=1-145"/>
</dbReference>
<dbReference type="PDB" id="6ZSA">
    <property type="method" value="EM"/>
    <property type="resolution" value="4.00 A"/>
    <property type="chains" value="XL=1-145"/>
</dbReference>
<dbReference type="PDB" id="6ZSB">
    <property type="method" value="EM"/>
    <property type="resolution" value="4.50 A"/>
    <property type="chains" value="XL=1-145"/>
</dbReference>
<dbReference type="PDB" id="6ZSC">
    <property type="method" value="EM"/>
    <property type="resolution" value="3.50 A"/>
    <property type="chains" value="XL=1-145"/>
</dbReference>
<dbReference type="PDB" id="6ZSD">
    <property type="method" value="EM"/>
    <property type="resolution" value="3.70 A"/>
    <property type="chains" value="XL=1-145"/>
</dbReference>
<dbReference type="PDB" id="6ZSE">
    <property type="method" value="EM"/>
    <property type="resolution" value="5.00 A"/>
    <property type="chains" value="XL=1-145"/>
</dbReference>
<dbReference type="PDB" id="6ZSG">
    <property type="method" value="EM"/>
    <property type="resolution" value="4.00 A"/>
    <property type="chains" value="XL=1-145"/>
</dbReference>
<dbReference type="PDB" id="7A5F">
    <property type="method" value="EM"/>
    <property type="resolution" value="4.40 A"/>
    <property type="chains" value="L3=1-145"/>
</dbReference>
<dbReference type="PDB" id="7A5G">
    <property type="method" value="EM"/>
    <property type="resolution" value="4.33 A"/>
    <property type="chains" value="L3=1-145"/>
</dbReference>
<dbReference type="PDB" id="7A5H">
    <property type="method" value="EM"/>
    <property type="resolution" value="3.30 A"/>
    <property type="chains" value="L=1-145"/>
</dbReference>
<dbReference type="PDB" id="7A5I">
    <property type="method" value="EM"/>
    <property type="resolution" value="3.70 A"/>
    <property type="chains" value="L3=1-145"/>
</dbReference>
<dbReference type="PDB" id="7A5J">
    <property type="method" value="EM"/>
    <property type="resolution" value="3.10 A"/>
    <property type="chains" value="L=1-145"/>
</dbReference>
<dbReference type="PDB" id="7A5K">
    <property type="method" value="EM"/>
    <property type="resolution" value="3.70 A"/>
    <property type="chains" value="L3=1-145"/>
</dbReference>
<dbReference type="PDB" id="7L08">
    <property type="method" value="EM"/>
    <property type="resolution" value="3.49 A"/>
    <property type="chains" value="L=1-145"/>
</dbReference>
<dbReference type="PDB" id="7L20">
    <property type="method" value="EM"/>
    <property type="resolution" value="3.15 A"/>
    <property type="chains" value="L=1-145"/>
</dbReference>
<dbReference type="PDB" id="7O9K">
    <property type="method" value="EM"/>
    <property type="resolution" value="3.10 A"/>
    <property type="chains" value="L=1-145"/>
</dbReference>
<dbReference type="PDB" id="7O9M">
    <property type="method" value="EM"/>
    <property type="resolution" value="2.50 A"/>
    <property type="chains" value="L=1-145"/>
</dbReference>
<dbReference type="PDB" id="7ODR">
    <property type="method" value="EM"/>
    <property type="resolution" value="2.90 A"/>
    <property type="chains" value="L=1-145"/>
</dbReference>
<dbReference type="PDB" id="7ODS">
    <property type="method" value="EM"/>
    <property type="resolution" value="3.10 A"/>
    <property type="chains" value="L=1-145"/>
</dbReference>
<dbReference type="PDB" id="7ODT">
    <property type="method" value="EM"/>
    <property type="resolution" value="3.10 A"/>
    <property type="chains" value="L=1-145"/>
</dbReference>
<dbReference type="PDB" id="7OF0">
    <property type="method" value="EM"/>
    <property type="resolution" value="2.20 A"/>
    <property type="chains" value="L=1-145"/>
</dbReference>
<dbReference type="PDB" id="7OF2">
    <property type="method" value="EM"/>
    <property type="resolution" value="2.70 A"/>
    <property type="chains" value="L=1-145"/>
</dbReference>
<dbReference type="PDB" id="7OF3">
    <property type="method" value="EM"/>
    <property type="resolution" value="2.70 A"/>
    <property type="chains" value="L=1-145"/>
</dbReference>
<dbReference type="PDB" id="7OF4">
    <property type="method" value="EM"/>
    <property type="resolution" value="2.70 A"/>
    <property type="chains" value="L=1-145"/>
</dbReference>
<dbReference type="PDB" id="7OF5">
    <property type="method" value="EM"/>
    <property type="resolution" value="2.90 A"/>
    <property type="chains" value="L=1-145"/>
</dbReference>
<dbReference type="PDB" id="7OF6">
    <property type="method" value="EM"/>
    <property type="resolution" value="2.60 A"/>
    <property type="chains" value="L=1-145"/>
</dbReference>
<dbReference type="PDB" id="7OF7">
    <property type="method" value="EM"/>
    <property type="resolution" value="2.50 A"/>
    <property type="chains" value="L=1-145"/>
</dbReference>
<dbReference type="PDB" id="7OG4">
    <property type="method" value="EM"/>
    <property type="resolution" value="3.80 A"/>
    <property type="chains" value="XL=1-145"/>
</dbReference>
<dbReference type="PDB" id="7OI6">
    <property type="method" value="EM"/>
    <property type="resolution" value="5.70 A"/>
    <property type="chains" value="L=1-145"/>
</dbReference>
<dbReference type="PDB" id="7OI7">
    <property type="method" value="EM"/>
    <property type="resolution" value="3.50 A"/>
    <property type="chains" value="L=1-145"/>
</dbReference>
<dbReference type="PDB" id="7OI8">
    <property type="method" value="EM"/>
    <property type="resolution" value="3.50 A"/>
    <property type="chains" value="L=1-145"/>
</dbReference>
<dbReference type="PDB" id="7OI9">
    <property type="method" value="EM"/>
    <property type="resolution" value="3.30 A"/>
    <property type="chains" value="L=1-145"/>
</dbReference>
<dbReference type="PDB" id="7OIA">
    <property type="method" value="EM"/>
    <property type="resolution" value="3.20 A"/>
    <property type="chains" value="L=1-145"/>
</dbReference>
<dbReference type="PDB" id="7OIB">
    <property type="method" value="EM"/>
    <property type="resolution" value="3.30 A"/>
    <property type="chains" value="L=1-145"/>
</dbReference>
<dbReference type="PDB" id="7OIC">
    <property type="method" value="EM"/>
    <property type="resolution" value="3.10 A"/>
    <property type="chains" value="L=1-145"/>
</dbReference>
<dbReference type="PDB" id="7OID">
    <property type="method" value="EM"/>
    <property type="resolution" value="3.70 A"/>
    <property type="chains" value="L=1-145"/>
</dbReference>
<dbReference type="PDB" id="7OIE">
    <property type="method" value="EM"/>
    <property type="resolution" value="3.50 A"/>
    <property type="chains" value="L=1-145"/>
</dbReference>
<dbReference type="PDB" id="7PD3">
    <property type="method" value="EM"/>
    <property type="resolution" value="3.40 A"/>
    <property type="chains" value="L=1-145"/>
</dbReference>
<dbReference type="PDB" id="7PO4">
    <property type="method" value="EM"/>
    <property type="resolution" value="2.56 A"/>
    <property type="chains" value="L=1-145"/>
</dbReference>
<dbReference type="PDB" id="7QH6">
    <property type="method" value="EM"/>
    <property type="resolution" value="3.08 A"/>
    <property type="chains" value="L=1-145"/>
</dbReference>
<dbReference type="PDB" id="7QH7">
    <property type="method" value="EM"/>
    <property type="resolution" value="2.89 A"/>
    <property type="chains" value="L=31-145"/>
</dbReference>
<dbReference type="PDB" id="7QI4">
    <property type="method" value="EM"/>
    <property type="resolution" value="2.21 A"/>
    <property type="chains" value="L=1-145"/>
</dbReference>
<dbReference type="PDB" id="7QI5">
    <property type="method" value="EM"/>
    <property type="resolution" value="2.63 A"/>
    <property type="chains" value="L=1-145"/>
</dbReference>
<dbReference type="PDB" id="7QI6">
    <property type="method" value="EM"/>
    <property type="resolution" value="2.98 A"/>
    <property type="chains" value="L=1-145"/>
</dbReference>
<dbReference type="PDB" id="8ANY">
    <property type="method" value="EM"/>
    <property type="resolution" value="2.85 A"/>
    <property type="chains" value="L=1-145"/>
</dbReference>
<dbReference type="PDB" id="8K2A">
    <property type="method" value="EM"/>
    <property type="resolution" value="2.90 A"/>
    <property type="chains" value="LN=1-145"/>
</dbReference>
<dbReference type="PDB" id="8K2B">
    <property type="method" value="EM"/>
    <property type="resolution" value="3.40 A"/>
    <property type="chains" value="LN=1-145"/>
</dbReference>
<dbReference type="PDB" id="8OIR">
    <property type="method" value="EM"/>
    <property type="resolution" value="3.10 A"/>
    <property type="chains" value="BS=1-145"/>
</dbReference>
<dbReference type="PDB" id="8OIT">
    <property type="method" value="EM"/>
    <property type="resolution" value="2.90 A"/>
    <property type="chains" value="BS=1-145"/>
</dbReference>
<dbReference type="PDB" id="8PK0">
    <property type="method" value="EM"/>
    <property type="resolution" value="3.03 A"/>
    <property type="chains" value="L=1-145"/>
</dbReference>
<dbReference type="PDB" id="8QSJ">
    <property type="method" value="EM"/>
    <property type="resolution" value="3.00 A"/>
    <property type="chains" value="L=1-145"/>
</dbReference>
<dbReference type="PDB" id="8QU1">
    <property type="method" value="EM"/>
    <property type="resolution" value="2.74 A"/>
    <property type="chains" value="L=1-145"/>
</dbReference>
<dbReference type="PDB" id="8QU5">
    <property type="method" value="EM"/>
    <property type="resolution" value="2.42 A"/>
    <property type="chains" value="L=1-145"/>
</dbReference>
<dbReference type="PDB" id="8RRI">
    <property type="method" value="EM"/>
    <property type="resolution" value="2.40 A"/>
    <property type="chains" value="L=1-145"/>
</dbReference>
<dbReference type="PDB" id="8XT0">
    <property type="method" value="EM"/>
    <property type="resolution" value="3.20 A"/>
    <property type="chains" value="LN=1-145"/>
</dbReference>
<dbReference type="PDB" id="8XT1">
    <property type="method" value="EM"/>
    <property type="resolution" value="3.10 A"/>
    <property type="chains" value="LN=1-145"/>
</dbReference>
<dbReference type="PDB" id="8XT2">
    <property type="method" value="EM"/>
    <property type="resolution" value="3.30 A"/>
    <property type="chains" value="LN=1-145"/>
</dbReference>
<dbReference type="PDB" id="8XT3">
    <property type="method" value="EM"/>
    <property type="resolution" value="3.10 A"/>
    <property type="chains" value="LN=1-145"/>
</dbReference>
<dbReference type="PDBsum" id="3J7Y"/>
<dbReference type="PDBsum" id="3J9M"/>
<dbReference type="PDBsum" id="5OOL"/>
<dbReference type="PDBsum" id="5OOM"/>
<dbReference type="PDBsum" id="6I9R"/>
<dbReference type="PDBsum" id="6NU2"/>
<dbReference type="PDBsum" id="6NU3"/>
<dbReference type="PDBsum" id="6VLZ"/>
<dbReference type="PDBsum" id="6VMI"/>
<dbReference type="PDBsum" id="6ZM5"/>
<dbReference type="PDBsum" id="6ZM6"/>
<dbReference type="PDBsum" id="6ZS9"/>
<dbReference type="PDBsum" id="6ZSA"/>
<dbReference type="PDBsum" id="6ZSB"/>
<dbReference type="PDBsum" id="6ZSC"/>
<dbReference type="PDBsum" id="6ZSD"/>
<dbReference type="PDBsum" id="6ZSE"/>
<dbReference type="PDBsum" id="6ZSG"/>
<dbReference type="PDBsum" id="7A5F"/>
<dbReference type="PDBsum" id="7A5G"/>
<dbReference type="PDBsum" id="7A5H"/>
<dbReference type="PDBsum" id="7A5I"/>
<dbReference type="PDBsum" id="7A5J"/>
<dbReference type="PDBsum" id="7A5K"/>
<dbReference type="PDBsum" id="7L08"/>
<dbReference type="PDBsum" id="7L20"/>
<dbReference type="PDBsum" id="7O9K"/>
<dbReference type="PDBsum" id="7O9M"/>
<dbReference type="PDBsum" id="7ODR"/>
<dbReference type="PDBsum" id="7ODS"/>
<dbReference type="PDBsum" id="7ODT"/>
<dbReference type="PDBsum" id="7OF0"/>
<dbReference type="PDBsum" id="7OF2"/>
<dbReference type="PDBsum" id="7OF3"/>
<dbReference type="PDBsum" id="7OF4"/>
<dbReference type="PDBsum" id="7OF5"/>
<dbReference type="PDBsum" id="7OF6"/>
<dbReference type="PDBsum" id="7OF7"/>
<dbReference type="PDBsum" id="7OG4"/>
<dbReference type="PDBsum" id="7OI6"/>
<dbReference type="PDBsum" id="7OI7"/>
<dbReference type="PDBsum" id="7OI8"/>
<dbReference type="PDBsum" id="7OI9"/>
<dbReference type="PDBsum" id="7OIA"/>
<dbReference type="PDBsum" id="7OIB"/>
<dbReference type="PDBsum" id="7OIC"/>
<dbReference type="PDBsum" id="7OID"/>
<dbReference type="PDBsum" id="7OIE"/>
<dbReference type="PDBsum" id="7PD3"/>
<dbReference type="PDBsum" id="7PO4"/>
<dbReference type="PDBsum" id="7QH6"/>
<dbReference type="PDBsum" id="7QH7"/>
<dbReference type="PDBsum" id="7QI4"/>
<dbReference type="PDBsum" id="7QI5"/>
<dbReference type="PDBsum" id="7QI6"/>
<dbReference type="PDBsum" id="8ANY"/>
<dbReference type="PDBsum" id="8K2A"/>
<dbReference type="PDBsum" id="8K2B"/>
<dbReference type="PDBsum" id="8OIR"/>
<dbReference type="PDBsum" id="8OIT"/>
<dbReference type="PDBsum" id="8PK0"/>
<dbReference type="PDBsum" id="8QSJ"/>
<dbReference type="PDBsum" id="8QU1"/>
<dbReference type="PDBsum" id="8QU5"/>
<dbReference type="PDBsum" id="8RRI"/>
<dbReference type="PDBsum" id="8XT0"/>
<dbReference type="PDBsum" id="8XT1"/>
<dbReference type="PDBsum" id="8XT2"/>
<dbReference type="PDBsum" id="8XT3"/>
<dbReference type="EMDB" id="EMD-0514"/>
<dbReference type="EMDB" id="EMD-0515"/>
<dbReference type="EMDB" id="EMD-11278"/>
<dbReference type="EMDB" id="EMD-11279"/>
<dbReference type="EMDB" id="EMD-11390"/>
<dbReference type="EMDB" id="EMD-11391"/>
<dbReference type="EMDB" id="EMD-11392"/>
<dbReference type="EMDB" id="EMD-11393"/>
<dbReference type="EMDB" id="EMD-11394"/>
<dbReference type="EMDB" id="EMD-11395"/>
<dbReference type="EMDB" id="EMD-11397"/>
<dbReference type="EMDB" id="EMD-11641"/>
<dbReference type="EMDB" id="EMD-11642"/>
<dbReference type="EMDB" id="EMD-11643"/>
<dbReference type="EMDB" id="EMD-11644"/>
<dbReference type="EMDB" id="EMD-11645"/>
<dbReference type="EMDB" id="EMD-11646"/>
<dbReference type="EMDB" id="EMD-12763"/>
<dbReference type="EMDB" id="EMD-12764"/>
<dbReference type="EMDB" id="EMD-12845"/>
<dbReference type="EMDB" id="EMD-12846"/>
<dbReference type="EMDB" id="EMD-12847"/>
<dbReference type="EMDB" id="EMD-12865"/>
<dbReference type="EMDB" id="EMD-12867"/>
<dbReference type="EMDB" id="EMD-12868"/>
<dbReference type="EMDB" id="EMD-12869"/>
<dbReference type="EMDB" id="EMD-12870"/>
<dbReference type="EMDB" id="EMD-12871"/>
<dbReference type="EMDB" id="EMD-12872"/>
<dbReference type="EMDB" id="EMD-12877"/>
<dbReference type="EMDB" id="EMD-12919"/>
<dbReference type="EMDB" id="EMD-12920"/>
<dbReference type="EMDB" id="EMD-12921"/>
<dbReference type="EMDB" id="EMD-12922"/>
<dbReference type="EMDB" id="EMD-12923"/>
<dbReference type="EMDB" id="EMD-12924"/>
<dbReference type="EMDB" id="EMD-12925"/>
<dbReference type="EMDB" id="EMD-12926"/>
<dbReference type="EMDB" id="EMD-12927"/>
<dbReference type="EMDB" id="EMD-13329"/>
<dbReference type="EMDB" id="EMD-13562"/>
<dbReference type="EMDB" id="EMD-13965"/>
<dbReference type="EMDB" id="EMD-13967"/>
<dbReference type="EMDB" id="EMD-13980"/>
<dbReference type="EMDB" id="EMD-13981"/>
<dbReference type="EMDB" id="EMD-13982"/>
<dbReference type="EMDB" id="EMD-15544"/>
<dbReference type="EMDB" id="EMD-16897"/>
<dbReference type="EMDB" id="EMD-16899"/>
<dbReference type="EMDB" id="EMD-17719"/>
<dbReference type="EMDB" id="EMD-19460"/>
<dbReference type="EMDB" id="EMD-21233"/>
<dbReference type="EMDB" id="EMD-21242"/>
<dbReference type="EMDB" id="EMD-23096"/>
<dbReference type="EMDB" id="EMD-23121"/>
<dbReference type="EMDB" id="EMD-36836"/>
<dbReference type="EMDB" id="EMD-36837"/>
<dbReference type="EMDB" id="EMD-3842"/>
<dbReference type="EMDB" id="EMD-3843"/>
<dbReference type="EMDB" id="EMD-38632"/>
<dbReference type="EMDB" id="EMD-38633"/>
<dbReference type="EMDB" id="EMD-38634"/>
<dbReference type="EMDB" id="EMD-38635"/>
<dbReference type="EMDB" id="EMD-4434"/>
<dbReference type="SMR" id="Q6P1L8"/>
<dbReference type="BioGRID" id="122350">
    <property type="interactions" value="135"/>
</dbReference>
<dbReference type="ComplexPortal" id="CPX-5226">
    <property type="entry name" value="39S mitochondrial large ribosomal subunit"/>
</dbReference>
<dbReference type="CORUM" id="Q6P1L8"/>
<dbReference type="FunCoup" id="Q6P1L8">
    <property type="interactions" value="805"/>
</dbReference>
<dbReference type="IntAct" id="Q6P1L8">
    <property type="interactions" value="47"/>
</dbReference>
<dbReference type="MINT" id="Q6P1L8"/>
<dbReference type="STRING" id="9606.ENSP00000361084"/>
<dbReference type="GlyGen" id="Q6P1L8">
    <property type="glycosylation" value="1 site, 1 O-linked glycan (1 site)"/>
</dbReference>
<dbReference type="iPTMnet" id="Q6P1L8"/>
<dbReference type="PhosphoSitePlus" id="Q6P1L8"/>
<dbReference type="SwissPalm" id="Q6P1L8"/>
<dbReference type="BioMuta" id="MRPL14"/>
<dbReference type="DMDM" id="74749064"/>
<dbReference type="jPOST" id="Q6P1L8"/>
<dbReference type="MassIVE" id="Q6P1L8"/>
<dbReference type="PaxDb" id="9606-ENSP00000361084"/>
<dbReference type="PeptideAtlas" id="Q6P1L8"/>
<dbReference type="ProteomicsDB" id="66848"/>
<dbReference type="Pumba" id="Q6P1L8"/>
<dbReference type="TopDownProteomics" id="Q6P1L8"/>
<dbReference type="Antibodypedia" id="49263">
    <property type="antibodies" value="117 antibodies from 22 providers"/>
</dbReference>
<dbReference type="DNASU" id="64928"/>
<dbReference type="Ensembl" id="ENST00000372014.5">
    <property type="protein sequence ID" value="ENSP00000361084.3"/>
    <property type="gene ID" value="ENSG00000180992.7"/>
</dbReference>
<dbReference type="GeneID" id="64928"/>
<dbReference type="KEGG" id="hsa:64928"/>
<dbReference type="MANE-Select" id="ENST00000372014.5">
    <property type="protein sequence ID" value="ENSP00000361084.3"/>
    <property type="RefSeq nucleotide sequence ID" value="NM_032111.4"/>
    <property type="RefSeq protein sequence ID" value="NP_115487.2"/>
</dbReference>
<dbReference type="UCSC" id="uc003owp.4">
    <property type="organism name" value="human"/>
</dbReference>
<dbReference type="AGR" id="HGNC:14279"/>
<dbReference type="CTD" id="64928"/>
<dbReference type="DisGeNET" id="64928"/>
<dbReference type="GeneCards" id="MRPL14"/>
<dbReference type="HGNC" id="HGNC:14279">
    <property type="gene designation" value="MRPL14"/>
</dbReference>
<dbReference type="HPA" id="ENSG00000180992">
    <property type="expression patterns" value="Tissue enhanced (skeletal)"/>
</dbReference>
<dbReference type="MIM" id="611827">
    <property type="type" value="gene"/>
</dbReference>
<dbReference type="neXtProt" id="NX_Q6P1L8"/>
<dbReference type="OpenTargets" id="ENSG00000180992"/>
<dbReference type="PharmGKB" id="PA30943"/>
<dbReference type="VEuPathDB" id="HostDB:ENSG00000180992"/>
<dbReference type="eggNOG" id="KOG3441">
    <property type="taxonomic scope" value="Eukaryota"/>
</dbReference>
<dbReference type="GeneTree" id="ENSGT00390000001121"/>
<dbReference type="HOGENOM" id="CLU_128925_1_0_1"/>
<dbReference type="InParanoid" id="Q6P1L8"/>
<dbReference type="OMA" id="RCIHVYT"/>
<dbReference type="OrthoDB" id="274765at2759"/>
<dbReference type="PAN-GO" id="Q6P1L8">
    <property type="GO annotations" value="1 GO annotation based on evolutionary models"/>
</dbReference>
<dbReference type="PhylomeDB" id="Q6P1L8"/>
<dbReference type="TreeFam" id="TF324586"/>
<dbReference type="PathwayCommons" id="Q6P1L8"/>
<dbReference type="Reactome" id="R-HSA-5368286">
    <property type="pathway name" value="Mitochondrial translation initiation"/>
</dbReference>
<dbReference type="Reactome" id="R-HSA-5389840">
    <property type="pathway name" value="Mitochondrial translation elongation"/>
</dbReference>
<dbReference type="Reactome" id="R-HSA-5419276">
    <property type="pathway name" value="Mitochondrial translation termination"/>
</dbReference>
<dbReference type="SignaLink" id="Q6P1L8"/>
<dbReference type="SIGNOR" id="Q6P1L8"/>
<dbReference type="BioGRID-ORCS" id="64928">
    <property type="hits" value="376 hits in 1155 CRISPR screens"/>
</dbReference>
<dbReference type="ChiTaRS" id="MRPL14">
    <property type="organism name" value="human"/>
</dbReference>
<dbReference type="EvolutionaryTrace" id="Q6P1L8"/>
<dbReference type="GenomeRNAi" id="64928"/>
<dbReference type="Pharos" id="Q6P1L8">
    <property type="development level" value="Tdark"/>
</dbReference>
<dbReference type="PRO" id="PR:Q6P1L8"/>
<dbReference type="Proteomes" id="UP000005640">
    <property type="component" value="Chromosome 6"/>
</dbReference>
<dbReference type="RNAct" id="Q6P1L8">
    <property type="molecule type" value="protein"/>
</dbReference>
<dbReference type="Bgee" id="ENSG00000180992">
    <property type="expression patterns" value="Expressed in tibialis anterior and 189 other cell types or tissues"/>
</dbReference>
<dbReference type="ExpressionAtlas" id="Q6P1L8">
    <property type="expression patterns" value="baseline and differential"/>
</dbReference>
<dbReference type="GO" id="GO:0005743">
    <property type="term" value="C:mitochondrial inner membrane"/>
    <property type="evidence" value="ECO:0000304"/>
    <property type="project" value="Reactome"/>
</dbReference>
<dbReference type="GO" id="GO:0005762">
    <property type="term" value="C:mitochondrial large ribosomal subunit"/>
    <property type="evidence" value="ECO:0000314"/>
    <property type="project" value="UniProtKB"/>
</dbReference>
<dbReference type="GO" id="GO:0005739">
    <property type="term" value="C:mitochondrion"/>
    <property type="evidence" value="ECO:0000314"/>
    <property type="project" value="UniProtKB"/>
</dbReference>
<dbReference type="GO" id="GO:0003723">
    <property type="term" value="F:RNA binding"/>
    <property type="evidence" value="ECO:0007005"/>
    <property type="project" value="UniProtKB"/>
</dbReference>
<dbReference type="GO" id="GO:0003735">
    <property type="term" value="F:structural constituent of ribosome"/>
    <property type="evidence" value="ECO:0007669"/>
    <property type="project" value="InterPro"/>
</dbReference>
<dbReference type="GO" id="GO:0032543">
    <property type="term" value="P:mitochondrial translation"/>
    <property type="evidence" value="ECO:0000303"/>
    <property type="project" value="ComplexPortal"/>
</dbReference>
<dbReference type="CDD" id="cd00337">
    <property type="entry name" value="Ribosomal_uL14"/>
    <property type="match status" value="1"/>
</dbReference>
<dbReference type="FunFam" id="2.40.150.20:FF:000004">
    <property type="entry name" value="39S ribosomal protein L14, mitochondrial"/>
    <property type="match status" value="1"/>
</dbReference>
<dbReference type="Gene3D" id="2.40.150.20">
    <property type="entry name" value="Ribosomal protein L14"/>
    <property type="match status" value="1"/>
</dbReference>
<dbReference type="HAMAP" id="MF_01367">
    <property type="entry name" value="Ribosomal_uL14"/>
    <property type="match status" value="1"/>
</dbReference>
<dbReference type="InterPro" id="IPR000218">
    <property type="entry name" value="Ribosomal_uL14"/>
</dbReference>
<dbReference type="InterPro" id="IPR036853">
    <property type="entry name" value="Ribosomal_uL14_sf"/>
</dbReference>
<dbReference type="PANTHER" id="PTHR21037">
    <property type="entry name" value="39S RIBOSOMAL PROTEIN L14, MITOCHONDRIAL"/>
    <property type="match status" value="1"/>
</dbReference>
<dbReference type="PANTHER" id="PTHR21037:SF3">
    <property type="entry name" value="LARGE RIBOSOMAL SUBUNIT PROTEIN UL14M"/>
    <property type="match status" value="1"/>
</dbReference>
<dbReference type="Pfam" id="PF00238">
    <property type="entry name" value="Ribosomal_L14"/>
    <property type="match status" value="1"/>
</dbReference>
<dbReference type="SMART" id="SM01374">
    <property type="entry name" value="Ribosomal_L14"/>
    <property type="match status" value="1"/>
</dbReference>
<dbReference type="SUPFAM" id="SSF50193">
    <property type="entry name" value="Ribosomal protein L14"/>
    <property type="match status" value="1"/>
</dbReference>
<reference key="1">
    <citation type="journal article" date="2004" name="Nat. Genet.">
        <title>Complete sequencing and characterization of 21,243 full-length human cDNAs.</title>
        <authorList>
            <person name="Ota T."/>
            <person name="Suzuki Y."/>
            <person name="Nishikawa T."/>
            <person name="Otsuki T."/>
            <person name="Sugiyama T."/>
            <person name="Irie R."/>
            <person name="Wakamatsu A."/>
            <person name="Hayashi K."/>
            <person name="Sato H."/>
            <person name="Nagai K."/>
            <person name="Kimura K."/>
            <person name="Makita H."/>
            <person name="Sekine M."/>
            <person name="Obayashi M."/>
            <person name="Nishi T."/>
            <person name="Shibahara T."/>
            <person name="Tanaka T."/>
            <person name="Ishii S."/>
            <person name="Yamamoto J."/>
            <person name="Saito K."/>
            <person name="Kawai Y."/>
            <person name="Isono Y."/>
            <person name="Nakamura Y."/>
            <person name="Nagahari K."/>
            <person name="Murakami K."/>
            <person name="Yasuda T."/>
            <person name="Iwayanagi T."/>
            <person name="Wagatsuma M."/>
            <person name="Shiratori A."/>
            <person name="Sudo H."/>
            <person name="Hosoiri T."/>
            <person name="Kaku Y."/>
            <person name="Kodaira H."/>
            <person name="Kondo H."/>
            <person name="Sugawara M."/>
            <person name="Takahashi M."/>
            <person name="Kanda K."/>
            <person name="Yokoi T."/>
            <person name="Furuya T."/>
            <person name="Kikkawa E."/>
            <person name="Omura Y."/>
            <person name="Abe K."/>
            <person name="Kamihara K."/>
            <person name="Katsuta N."/>
            <person name="Sato K."/>
            <person name="Tanikawa M."/>
            <person name="Yamazaki M."/>
            <person name="Ninomiya K."/>
            <person name="Ishibashi T."/>
            <person name="Yamashita H."/>
            <person name="Murakawa K."/>
            <person name="Fujimori K."/>
            <person name="Tanai H."/>
            <person name="Kimata M."/>
            <person name="Watanabe M."/>
            <person name="Hiraoka S."/>
            <person name="Chiba Y."/>
            <person name="Ishida S."/>
            <person name="Ono Y."/>
            <person name="Takiguchi S."/>
            <person name="Watanabe S."/>
            <person name="Yosida M."/>
            <person name="Hotuta T."/>
            <person name="Kusano J."/>
            <person name="Kanehori K."/>
            <person name="Takahashi-Fujii A."/>
            <person name="Hara H."/>
            <person name="Tanase T.-O."/>
            <person name="Nomura Y."/>
            <person name="Togiya S."/>
            <person name="Komai F."/>
            <person name="Hara R."/>
            <person name="Takeuchi K."/>
            <person name="Arita M."/>
            <person name="Imose N."/>
            <person name="Musashino K."/>
            <person name="Yuuki H."/>
            <person name="Oshima A."/>
            <person name="Sasaki N."/>
            <person name="Aotsuka S."/>
            <person name="Yoshikawa Y."/>
            <person name="Matsunawa H."/>
            <person name="Ichihara T."/>
            <person name="Shiohata N."/>
            <person name="Sano S."/>
            <person name="Moriya S."/>
            <person name="Momiyama H."/>
            <person name="Satoh N."/>
            <person name="Takami S."/>
            <person name="Terashima Y."/>
            <person name="Suzuki O."/>
            <person name="Nakagawa S."/>
            <person name="Senoh A."/>
            <person name="Mizoguchi H."/>
            <person name="Goto Y."/>
            <person name="Shimizu F."/>
            <person name="Wakebe H."/>
            <person name="Hishigaki H."/>
            <person name="Watanabe T."/>
            <person name="Sugiyama A."/>
            <person name="Takemoto M."/>
            <person name="Kawakami B."/>
            <person name="Yamazaki M."/>
            <person name="Watanabe K."/>
            <person name="Kumagai A."/>
            <person name="Itakura S."/>
            <person name="Fukuzumi Y."/>
            <person name="Fujimori Y."/>
            <person name="Komiyama M."/>
            <person name="Tashiro H."/>
            <person name="Tanigami A."/>
            <person name="Fujiwara T."/>
            <person name="Ono T."/>
            <person name="Yamada K."/>
            <person name="Fujii Y."/>
            <person name="Ozaki K."/>
            <person name="Hirao M."/>
            <person name="Ohmori Y."/>
            <person name="Kawabata A."/>
            <person name="Hikiji T."/>
            <person name="Kobatake N."/>
            <person name="Inagaki H."/>
            <person name="Ikema Y."/>
            <person name="Okamoto S."/>
            <person name="Okitani R."/>
            <person name="Kawakami T."/>
            <person name="Noguchi S."/>
            <person name="Itoh T."/>
            <person name="Shigeta K."/>
            <person name="Senba T."/>
            <person name="Matsumura K."/>
            <person name="Nakajima Y."/>
            <person name="Mizuno T."/>
            <person name="Morinaga M."/>
            <person name="Sasaki M."/>
            <person name="Togashi T."/>
            <person name="Oyama M."/>
            <person name="Hata H."/>
            <person name="Watanabe M."/>
            <person name="Komatsu T."/>
            <person name="Mizushima-Sugano J."/>
            <person name="Satoh T."/>
            <person name="Shirai Y."/>
            <person name="Takahashi Y."/>
            <person name="Nakagawa K."/>
            <person name="Okumura K."/>
            <person name="Nagase T."/>
            <person name="Nomura N."/>
            <person name="Kikuchi H."/>
            <person name="Masuho Y."/>
            <person name="Yamashita R."/>
            <person name="Nakai K."/>
            <person name="Yada T."/>
            <person name="Nakamura Y."/>
            <person name="Ohara O."/>
            <person name="Isogai T."/>
            <person name="Sugano S."/>
        </authorList>
    </citation>
    <scope>NUCLEOTIDE SEQUENCE [LARGE SCALE MRNA]</scope>
    <source>
        <tissue>Thymus</tissue>
    </source>
</reference>
<reference key="2">
    <citation type="journal article" date="2003" name="Nature">
        <title>The DNA sequence and analysis of human chromosome 6.</title>
        <authorList>
            <person name="Mungall A.J."/>
            <person name="Palmer S.A."/>
            <person name="Sims S.K."/>
            <person name="Edwards C.A."/>
            <person name="Ashurst J.L."/>
            <person name="Wilming L."/>
            <person name="Jones M.C."/>
            <person name="Horton R."/>
            <person name="Hunt S.E."/>
            <person name="Scott C.E."/>
            <person name="Gilbert J.G.R."/>
            <person name="Clamp M.E."/>
            <person name="Bethel G."/>
            <person name="Milne S."/>
            <person name="Ainscough R."/>
            <person name="Almeida J.P."/>
            <person name="Ambrose K.D."/>
            <person name="Andrews T.D."/>
            <person name="Ashwell R.I.S."/>
            <person name="Babbage A.K."/>
            <person name="Bagguley C.L."/>
            <person name="Bailey J."/>
            <person name="Banerjee R."/>
            <person name="Barker D.J."/>
            <person name="Barlow K.F."/>
            <person name="Bates K."/>
            <person name="Beare D.M."/>
            <person name="Beasley H."/>
            <person name="Beasley O."/>
            <person name="Bird C.P."/>
            <person name="Blakey S.E."/>
            <person name="Bray-Allen S."/>
            <person name="Brook J."/>
            <person name="Brown A.J."/>
            <person name="Brown J.Y."/>
            <person name="Burford D.C."/>
            <person name="Burrill W."/>
            <person name="Burton J."/>
            <person name="Carder C."/>
            <person name="Carter N.P."/>
            <person name="Chapman J.C."/>
            <person name="Clark S.Y."/>
            <person name="Clark G."/>
            <person name="Clee C.M."/>
            <person name="Clegg S."/>
            <person name="Cobley V."/>
            <person name="Collier R.E."/>
            <person name="Collins J.E."/>
            <person name="Colman L.K."/>
            <person name="Corby N.R."/>
            <person name="Coville G.J."/>
            <person name="Culley K.M."/>
            <person name="Dhami P."/>
            <person name="Davies J."/>
            <person name="Dunn M."/>
            <person name="Earthrowl M.E."/>
            <person name="Ellington A.E."/>
            <person name="Evans K.A."/>
            <person name="Faulkner L."/>
            <person name="Francis M.D."/>
            <person name="Frankish A."/>
            <person name="Frankland J."/>
            <person name="French L."/>
            <person name="Garner P."/>
            <person name="Garnett J."/>
            <person name="Ghori M.J."/>
            <person name="Gilby L.M."/>
            <person name="Gillson C.J."/>
            <person name="Glithero R.J."/>
            <person name="Grafham D.V."/>
            <person name="Grant M."/>
            <person name="Gribble S."/>
            <person name="Griffiths C."/>
            <person name="Griffiths M.N.D."/>
            <person name="Hall R."/>
            <person name="Halls K.S."/>
            <person name="Hammond S."/>
            <person name="Harley J.L."/>
            <person name="Hart E.A."/>
            <person name="Heath P.D."/>
            <person name="Heathcott R."/>
            <person name="Holmes S.J."/>
            <person name="Howden P.J."/>
            <person name="Howe K.L."/>
            <person name="Howell G.R."/>
            <person name="Huckle E."/>
            <person name="Humphray S.J."/>
            <person name="Humphries M.D."/>
            <person name="Hunt A.R."/>
            <person name="Johnson C.M."/>
            <person name="Joy A.A."/>
            <person name="Kay M."/>
            <person name="Keenan S.J."/>
            <person name="Kimberley A.M."/>
            <person name="King A."/>
            <person name="Laird G.K."/>
            <person name="Langford C."/>
            <person name="Lawlor S."/>
            <person name="Leongamornlert D.A."/>
            <person name="Leversha M."/>
            <person name="Lloyd C.R."/>
            <person name="Lloyd D.M."/>
            <person name="Loveland J.E."/>
            <person name="Lovell J."/>
            <person name="Martin S."/>
            <person name="Mashreghi-Mohammadi M."/>
            <person name="Maslen G.L."/>
            <person name="Matthews L."/>
            <person name="McCann O.T."/>
            <person name="McLaren S.J."/>
            <person name="McLay K."/>
            <person name="McMurray A."/>
            <person name="Moore M.J.F."/>
            <person name="Mullikin J.C."/>
            <person name="Niblett D."/>
            <person name="Nickerson T."/>
            <person name="Novik K.L."/>
            <person name="Oliver K."/>
            <person name="Overton-Larty E.K."/>
            <person name="Parker A."/>
            <person name="Patel R."/>
            <person name="Pearce A.V."/>
            <person name="Peck A.I."/>
            <person name="Phillimore B.J.C.T."/>
            <person name="Phillips S."/>
            <person name="Plumb R.W."/>
            <person name="Porter K.M."/>
            <person name="Ramsey Y."/>
            <person name="Ranby S.A."/>
            <person name="Rice C.M."/>
            <person name="Ross M.T."/>
            <person name="Searle S.M."/>
            <person name="Sehra H.K."/>
            <person name="Sheridan E."/>
            <person name="Skuce C.D."/>
            <person name="Smith S."/>
            <person name="Smith M."/>
            <person name="Spraggon L."/>
            <person name="Squares S.L."/>
            <person name="Steward C.A."/>
            <person name="Sycamore N."/>
            <person name="Tamlyn-Hall G."/>
            <person name="Tester J."/>
            <person name="Theaker A.J."/>
            <person name="Thomas D.W."/>
            <person name="Thorpe A."/>
            <person name="Tracey A."/>
            <person name="Tromans A."/>
            <person name="Tubby B."/>
            <person name="Wall M."/>
            <person name="Wallis J.M."/>
            <person name="West A.P."/>
            <person name="White S.S."/>
            <person name="Whitehead S.L."/>
            <person name="Whittaker H."/>
            <person name="Wild A."/>
            <person name="Willey D.J."/>
            <person name="Wilmer T.E."/>
            <person name="Wood J.M."/>
            <person name="Wray P.W."/>
            <person name="Wyatt J.C."/>
            <person name="Young L."/>
            <person name="Younger R.M."/>
            <person name="Bentley D.R."/>
            <person name="Coulson A."/>
            <person name="Durbin R.M."/>
            <person name="Hubbard T."/>
            <person name="Sulston J.E."/>
            <person name="Dunham I."/>
            <person name="Rogers J."/>
            <person name="Beck S."/>
        </authorList>
    </citation>
    <scope>NUCLEOTIDE SEQUENCE [LARGE SCALE GENOMIC DNA]</scope>
</reference>
<reference key="3">
    <citation type="submission" date="2005-07" db="EMBL/GenBank/DDBJ databases">
        <authorList>
            <person name="Mural R.J."/>
            <person name="Istrail S."/>
            <person name="Sutton G.G."/>
            <person name="Florea L."/>
            <person name="Halpern A.L."/>
            <person name="Mobarry C.M."/>
            <person name="Lippert R."/>
            <person name="Walenz B."/>
            <person name="Shatkay H."/>
            <person name="Dew I."/>
            <person name="Miller J.R."/>
            <person name="Flanigan M.J."/>
            <person name="Edwards N.J."/>
            <person name="Bolanos R."/>
            <person name="Fasulo D."/>
            <person name="Halldorsson B.V."/>
            <person name="Hannenhalli S."/>
            <person name="Turner R."/>
            <person name="Yooseph S."/>
            <person name="Lu F."/>
            <person name="Nusskern D.R."/>
            <person name="Shue B.C."/>
            <person name="Zheng X.H."/>
            <person name="Zhong F."/>
            <person name="Delcher A.L."/>
            <person name="Huson D.H."/>
            <person name="Kravitz S.A."/>
            <person name="Mouchard L."/>
            <person name="Reinert K."/>
            <person name="Remington K.A."/>
            <person name="Clark A.G."/>
            <person name="Waterman M.S."/>
            <person name="Eichler E.E."/>
            <person name="Adams M.D."/>
            <person name="Hunkapiller M.W."/>
            <person name="Myers E.W."/>
            <person name="Venter J.C."/>
        </authorList>
    </citation>
    <scope>NUCLEOTIDE SEQUENCE [LARGE SCALE GENOMIC DNA]</scope>
</reference>
<reference key="4">
    <citation type="journal article" date="2004" name="Genome Res.">
        <title>The status, quality, and expansion of the NIH full-length cDNA project: the Mammalian Gene Collection (MGC).</title>
        <authorList>
            <consortium name="The MGC Project Team"/>
        </authorList>
    </citation>
    <scope>NUCLEOTIDE SEQUENCE [LARGE SCALE MRNA]</scope>
    <source>
        <tissue>Pancreas</tissue>
    </source>
</reference>
<reference key="5">
    <citation type="journal article" date="2001" name="Genomics">
        <title>The human mitochondrial ribosomal protein genes: mapping of 54 genes to the chromosomes and implications for human disorders.</title>
        <authorList>
            <person name="Kenmochi N."/>
            <person name="Suzuki T."/>
            <person name="Uechi T."/>
            <person name="Magoori M."/>
            <person name="Kuniba M."/>
            <person name="Higa S."/>
            <person name="Watanabe K."/>
            <person name="Tanaka T."/>
        </authorList>
    </citation>
    <scope>NUCLEOTIDE SEQUENCE [GENOMIC DNA] OF 25-76</scope>
    <scope>SUBCELLULAR LOCATION</scope>
</reference>
<reference key="6">
    <citation type="journal article" date="2011" name="BMC Syst. Biol.">
        <title>Initial characterization of the human central proteome.</title>
        <authorList>
            <person name="Burkard T.R."/>
            <person name="Planyavsky M."/>
            <person name="Kaupe I."/>
            <person name="Breitwieser F.P."/>
            <person name="Buerckstuemmer T."/>
            <person name="Bennett K.L."/>
            <person name="Superti-Furga G."/>
            <person name="Colinge J."/>
        </authorList>
    </citation>
    <scope>IDENTIFICATION BY MASS SPECTROMETRY [LARGE SCALE ANALYSIS]</scope>
</reference>
<reference key="7">
    <citation type="journal article" date="2012" name="PLoS Genet.">
        <title>RsfA (YbeB) proteins are conserved ribosomal silencing factors.</title>
        <authorList>
            <person name="Hauser R."/>
            <person name="Pech M."/>
            <person name="Kijek J."/>
            <person name="Yamamoto H."/>
            <person name="Titz B."/>
            <person name="Naeve F."/>
            <person name="Tovchigrechko A."/>
            <person name="Yamamoto K."/>
            <person name="Szaflarski W."/>
            <person name="Takeuchi N."/>
            <person name="Stellberger T."/>
            <person name="Diefenbacher M.E."/>
            <person name="Nierhaus K.H."/>
            <person name="Uetz P."/>
        </authorList>
    </citation>
    <scope>FUNCTION</scope>
    <scope>SUBCELLULAR LOCATION</scope>
    <scope>INTERACTION WITH MALSU1</scope>
</reference>
<reference key="8">
    <citation type="journal article" date="2013" name="J. Proteome Res.">
        <title>Toward a comprehensive characterization of a human cancer cell phosphoproteome.</title>
        <authorList>
            <person name="Zhou H."/>
            <person name="Di Palma S."/>
            <person name="Preisinger C."/>
            <person name="Peng M."/>
            <person name="Polat A.N."/>
            <person name="Heck A.J."/>
            <person name="Mohammed S."/>
        </authorList>
    </citation>
    <scope>IDENTIFICATION BY MASS SPECTROMETRY [LARGE SCALE ANALYSIS]</scope>
    <source>
        <tissue>Erythroleukemia</tissue>
    </source>
</reference>
<reference key="9">
    <citation type="journal article" date="2015" name="Proteomics">
        <title>N-terminome analysis of the human mitochondrial proteome.</title>
        <authorList>
            <person name="Vaca Jacome A.S."/>
            <person name="Rabilloud T."/>
            <person name="Schaeffer-Reiss C."/>
            <person name="Rompais M."/>
            <person name="Ayoub D."/>
            <person name="Lane L."/>
            <person name="Bairoch A."/>
            <person name="Van Dorsselaer A."/>
            <person name="Carapito C."/>
        </authorList>
    </citation>
    <scope>IDENTIFICATION BY MASS SPECTROMETRY [LARGE SCALE ANALYSIS]</scope>
</reference>
<reference evidence="11" key="10">
    <citation type="journal article" date="2014" name="Science">
        <title>Structure of the large ribosomal subunit from human mitochondria.</title>
        <authorList>
            <person name="Brown A."/>
            <person name="Amunts A."/>
            <person name="Bai X.C."/>
            <person name="Sugimoto Y."/>
            <person name="Edwards P.C."/>
            <person name="Murshudov G."/>
            <person name="Scheres S.H."/>
            <person name="Ramakrishnan V."/>
        </authorList>
    </citation>
    <scope>STRUCTURE BY ELECTRON MICROSCOPY (3.40 ANGSTROMS)</scope>
    <scope>SUBCELLULAR LOCATION</scope>
    <scope>SUBUNIT</scope>
</reference>
<reference evidence="12" key="11">
    <citation type="journal article" date="2015" name="Science">
        <title>Ribosome. The structure of the human mitochondrial ribosome.</title>
        <authorList>
            <person name="Amunts A."/>
            <person name="Brown A."/>
            <person name="Toots J."/>
            <person name="Scheres S.H."/>
            <person name="Ramakrishnan V."/>
        </authorList>
    </citation>
    <scope>STRUCTURE BY ELECTRON MICROSCOPY (3.50 ANGSTROMS)</scope>
    <scope>SUBCELLULAR LOCATION</scope>
    <scope>SUBUNIT</scope>
</reference>
<reference evidence="13 14" key="12">
    <citation type="journal article" date="2017" name="Nat. Struct. Mol. Biol.">
        <title>Structures of the human mitochondrial ribosome in native states of assembly.</title>
        <authorList>
            <person name="Brown A."/>
            <person name="Rathore S."/>
            <person name="Kimanius D."/>
            <person name="Aibara S."/>
            <person name="Bai X.C."/>
            <person name="Rorbach J."/>
            <person name="Amunts A."/>
            <person name="Ramakrishnan V."/>
        </authorList>
    </citation>
    <scope>STRUCTURE BY ELECTRON MICROSCOPY (3.03 ANGSTROMS)</scope>
    <scope>SUBCELLULAR LOCATION</scope>
    <scope>SUBUNIT</scope>
</reference>
<reference evidence="15 16" key="13">
    <citation type="journal article" date="2022" name="Nat. Commun.">
        <title>A late-stage assembly checkpoint of the human mitochondrial ribosome large subunit.</title>
        <authorList>
            <person name="Rebelo-Guiomar P."/>
            <person name="Pellegrino S."/>
            <person name="Dent K.C."/>
            <person name="Sas-Chen A."/>
            <person name="Miller-Fleming L."/>
            <person name="Garone C."/>
            <person name="Van Haute L."/>
            <person name="Rogan J.F."/>
            <person name="Dinan A."/>
            <person name="Firth A.E."/>
            <person name="Andrews B."/>
            <person name="Whitworth A.J."/>
            <person name="Schwartz S."/>
            <person name="Warren A.J."/>
            <person name="Minczuk M."/>
        </authorList>
    </citation>
    <scope>STRUCTURE BY ELECTRON MICROSCOPY (2.9 ANGSTROMS) IN COMPLEX WITH MTLSU</scope>
    <scope>SUBUNIT</scope>
</reference>
<evidence type="ECO:0000250" key="1"/>
<evidence type="ECO:0000269" key="2">
    <source>
    </source>
</evidence>
<evidence type="ECO:0000269" key="3">
    <source>
    </source>
</evidence>
<evidence type="ECO:0000269" key="4">
    <source>
    </source>
</evidence>
<evidence type="ECO:0000269" key="5">
    <source>
    </source>
</evidence>
<evidence type="ECO:0000269" key="6">
    <source>
    </source>
</evidence>
<evidence type="ECO:0000269" key="7">
    <source>
    </source>
</evidence>
<evidence type="ECO:0000303" key="8">
    <source>
    </source>
</evidence>
<evidence type="ECO:0000305" key="9"/>
<evidence type="ECO:0000305" key="10">
    <source>
    </source>
</evidence>
<evidence type="ECO:0007744" key="11">
    <source>
        <dbReference type="PDB" id="3J7Y"/>
    </source>
</evidence>
<evidence type="ECO:0007744" key="12">
    <source>
        <dbReference type="PDB" id="3J9M"/>
    </source>
</evidence>
<evidence type="ECO:0007744" key="13">
    <source>
        <dbReference type="PDB" id="5OOL"/>
    </source>
</evidence>
<evidence type="ECO:0007744" key="14">
    <source>
        <dbReference type="PDB" id="5OOM"/>
    </source>
</evidence>
<evidence type="ECO:0007744" key="15">
    <source>
        <dbReference type="PDB" id="7QH6"/>
    </source>
</evidence>
<evidence type="ECO:0007744" key="16">
    <source>
        <dbReference type="PDB" id="7QH7"/>
    </source>
</evidence>
<evidence type="ECO:0007829" key="17">
    <source>
        <dbReference type="PDB" id="3J7Y"/>
    </source>
</evidence>
<evidence type="ECO:0007829" key="18">
    <source>
        <dbReference type="PDB" id="7OF0"/>
    </source>
</evidence>
<evidence type="ECO:0007829" key="19">
    <source>
        <dbReference type="PDB" id="7QH6"/>
    </source>
</evidence>
<protein>
    <recommendedName>
        <fullName evidence="8">Large ribosomal subunit protein uL14m</fullName>
    </recommendedName>
    <alternativeName>
        <fullName>39S ribosomal protein L14, mitochondrial</fullName>
        <shortName>L14mt</shortName>
        <shortName>MRP-L14</shortName>
    </alternativeName>
    <alternativeName>
        <fullName>39S ribosomal protein L32, mitochondrial</fullName>
        <shortName>L32mt</shortName>
        <shortName>MRP-L32</shortName>
    </alternativeName>
</protein>
<comment type="function">
    <text evidence="10">Forms part of 2 intersubunit bridges in the assembled ribosome. Upon binding to MALSU1 intersubunit bridge formation is blocked, preventing ribosome formation and repressing translation (Probable).</text>
</comment>
<comment type="subunit">
    <text evidence="3 4 5 6 7">Component of the mitochondrial large ribosomal subunit (mt-LSU) (PubMed:25278503, PubMed:25838379, PubMed:28892042, PubMed:35177605). Mature mammalian 55S mitochondrial ribosomes consist of a small (28S) and a large (39S) subunit. The 28S small subunit contains a 12S ribosomal RNA (12S mt-rRNA) and 30 different proteins. The 39S large subunit contains a 16S rRNA (16S mt-rRNA), a copy of mitochondrial valine transfer RNA (mt-tRNA(Val)), which plays an integral structural role, and 52 different proteins (PubMed:25278503, PubMed:25838379). Interacts with MALSU1 (PubMed:22829778).</text>
</comment>
<comment type="subcellular location">
    <subcellularLocation>
        <location evidence="2 3 4 5 6">Mitochondrion</location>
    </subcellularLocation>
</comment>
<comment type="similarity">
    <text evidence="9">Belongs to the universal ribosomal protein uL14 family.</text>
</comment>
<feature type="transit peptide" description="Mitochondrion" evidence="1">
    <location>
        <begin position="1"/>
        <end position="30"/>
    </location>
</feature>
<feature type="chain" id="PRO_0000261134" description="Large ribosomal subunit protein uL14m">
    <location>
        <begin position="31"/>
        <end position="145"/>
    </location>
</feature>
<feature type="helix" evidence="18">
    <location>
        <begin position="45"/>
        <end position="48"/>
    </location>
</feature>
<feature type="strand" evidence="18">
    <location>
        <begin position="56"/>
        <end position="65"/>
    </location>
</feature>
<feature type="strand" evidence="18">
    <location>
        <begin position="72"/>
        <end position="77"/>
    </location>
</feature>
<feature type="strand" evidence="18">
    <location>
        <begin position="80"/>
        <end position="88"/>
    </location>
</feature>
<feature type="strand" evidence="18">
    <location>
        <begin position="97"/>
        <end position="102"/>
    </location>
</feature>
<feature type="strand" evidence="18">
    <location>
        <begin position="104"/>
        <end position="108"/>
    </location>
</feature>
<feature type="strand" evidence="18">
    <location>
        <begin position="110"/>
        <end position="112"/>
    </location>
</feature>
<feature type="strand" evidence="18">
    <location>
        <begin position="114"/>
        <end position="117"/>
    </location>
</feature>
<feature type="strand" evidence="19">
    <location>
        <begin position="119"/>
        <end position="121"/>
    </location>
</feature>
<feature type="helix" evidence="18">
    <location>
        <begin position="125"/>
        <end position="127"/>
    </location>
</feature>
<feature type="strand" evidence="18">
    <location>
        <begin position="130"/>
        <end position="132"/>
    </location>
</feature>
<feature type="helix" evidence="18">
    <location>
        <begin position="135"/>
        <end position="140"/>
    </location>
</feature>
<feature type="strand" evidence="17">
    <location>
        <begin position="141"/>
        <end position="144"/>
    </location>
</feature>
<sequence length="145" mass="15948">MAFFTGLWGPFTCVSRVLSHHCFSTTGSLSAIQKMTRVRVVDNSALGNSPYHRAPRCIHVYKKNGVGKVGDQILLAIKGQKKKALIVGHCMPGPRMTPRFDSNNVVLIEDNGNPVGTRIKTPIPTSLRKREGEYSKVLAIAQNFV</sequence>
<name>RM14_HUMAN</name>
<keyword id="KW-0002">3D-structure</keyword>
<keyword id="KW-0496">Mitochondrion</keyword>
<keyword id="KW-1267">Proteomics identification</keyword>
<keyword id="KW-1185">Reference proteome</keyword>
<keyword id="KW-0687">Ribonucleoprotein</keyword>
<keyword id="KW-0689">Ribosomal protein</keyword>
<keyword id="KW-0809">Transit peptide</keyword>
<proteinExistence type="evidence at protein level"/>